<feature type="transit peptide" description="Mitochondrion" evidence="1">
    <location>
        <begin position="1"/>
        <end position="116"/>
    </location>
</feature>
<feature type="chain" id="PRO_0000342848" description="Pentatricopeptide repeat-containing protein At1g66345, mitochondrial">
    <location>
        <begin position="117"/>
        <end position="544"/>
    </location>
</feature>
<feature type="repeat" description="PPR 1">
    <location>
        <begin position="163"/>
        <end position="197"/>
    </location>
</feature>
<feature type="repeat" description="PPR 2">
    <location>
        <begin position="198"/>
        <end position="232"/>
    </location>
</feature>
<feature type="repeat" description="PPR 3">
    <location>
        <begin position="233"/>
        <end position="267"/>
    </location>
</feature>
<feature type="repeat" description="PPR 4">
    <location>
        <begin position="268"/>
        <end position="302"/>
    </location>
</feature>
<feature type="repeat" description="PPR 5">
    <location>
        <begin position="303"/>
        <end position="337"/>
    </location>
</feature>
<feature type="repeat" description="PPR 6">
    <location>
        <begin position="338"/>
        <end position="372"/>
    </location>
</feature>
<feature type="repeat" description="PPR 7">
    <location>
        <begin position="373"/>
        <end position="407"/>
    </location>
</feature>
<feature type="repeat" description="PPR 8">
    <location>
        <begin position="408"/>
        <end position="442"/>
    </location>
</feature>
<feature type="repeat" description="PPR 9">
    <location>
        <begin position="443"/>
        <end position="477"/>
    </location>
</feature>
<feature type="repeat" description="PPR 10">
    <location>
        <begin position="478"/>
        <end position="512"/>
    </location>
</feature>
<feature type="repeat" description="PPR 11">
    <location>
        <begin position="513"/>
        <end position="544"/>
    </location>
</feature>
<organism>
    <name type="scientific">Arabidopsis thaliana</name>
    <name type="common">Mouse-ear cress</name>
    <dbReference type="NCBI Taxonomy" id="3702"/>
    <lineage>
        <taxon>Eukaryota</taxon>
        <taxon>Viridiplantae</taxon>
        <taxon>Streptophyta</taxon>
        <taxon>Embryophyta</taxon>
        <taxon>Tracheophyta</taxon>
        <taxon>Spermatophyta</taxon>
        <taxon>Magnoliopsida</taxon>
        <taxon>eudicotyledons</taxon>
        <taxon>Gunneridae</taxon>
        <taxon>Pentapetalae</taxon>
        <taxon>rosids</taxon>
        <taxon>malvids</taxon>
        <taxon>Brassicales</taxon>
        <taxon>Brassicaceae</taxon>
        <taxon>Camelineae</taxon>
        <taxon>Arabidopsis</taxon>
    </lineage>
</organism>
<gene>
    <name type="ordered locus">At1g66345</name>
    <name type="ORF">T27F4.19</name>
</gene>
<accession>Q3ECH5</accession>
<dbReference type="EMBL" id="AC020665">
    <property type="status" value="NOT_ANNOTATED_CDS"/>
    <property type="molecule type" value="Genomic_DNA"/>
</dbReference>
<dbReference type="EMBL" id="CP002684">
    <property type="protein sequence ID" value="AEE34498.1"/>
    <property type="molecule type" value="Genomic_DNA"/>
</dbReference>
<dbReference type="RefSeq" id="NP_849849.1">
    <property type="nucleotide sequence ID" value="NM_179518.1"/>
</dbReference>
<dbReference type="SMR" id="Q3ECH5"/>
<dbReference type="FunCoup" id="Q3ECH5">
    <property type="interactions" value="4"/>
</dbReference>
<dbReference type="STRING" id="3702.Q3ECH5"/>
<dbReference type="iPTMnet" id="Q3ECH5"/>
<dbReference type="PaxDb" id="3702-AT1G66345.1"/>
<dbReference type="ProteomicsDB" id="250575"/>
<dbReference type="EnsemblPlants" id="AT1G66345.1">
    <property type="protein sequence ID" value="AT1G66345.1"/>
    <property type="gene ID" value="AT1G66345"/>
</dbReference>
<dbReference type="GeneID" id="842952"/>
<dbReference type="Gramene" id="AT1G66345.1">
    <property type="protein sequence ID" value="AT1G66345.1"/>
    <property type="gene ID" value="AT1G66345"/>
</dbReference>
<dbReference type="KEGG" id="ath:AT1G66345"/>
<dbReference type="Araport" id="AT1G66345"/>
<dbReference type="TAIR" id="AT1G66345">
    <property type="gene designation" value="MISF26"/>
</dbReference>
<dbReference type="eggNOG" id="KOG4197">
    <property type="taxonomic scope" value="Eukaryota"/>
</dbReference>
<dbReference type="HOGENOM" id="CLU_002706_49_12_1"/>
<dbReference type="InParanoid" id="Q3ECH5"/>
<dbReference type="OMA" id="CSAFNEM"/>
<dbReference type="OrthoDB" id="185373at2759"/>
<dbReference type="PhylomeDB" id="Q3ECH5"/>
<dbReference type="PRO" id="PR:Q3ECH5"/>
<dbReference type="Proteomes" id="UP000006548">
    <property type="component" value="Chromosome 1"/>
</dbReference>
<dbReference type="ExpressionAtlas" id="Q3ECH5">
    <property type="expression patterns" value="baseline and differential"/>
</dbReference>
<dbReference type="GO" id="GO:0005739">
    <property type="term" value="C:mitochondrion"/>
    <property type="evidence" value="ECO:0007669"/>
    <property type="project" value="UniProtKB-SubCell"/>
</dbReference>
<dbReference type="GO" id="GO:0000373">
    <property type="term" value="P:Group II intron splicing"/>
    <property type="evidence" value="ECO:0000315"/>
    <property type="project" value="TAIR"/>
</dbReference>
<dbReference type="GO" id="GO:0032981">
    <property type="term" value="P:mitochondrial respiratory chain complex I assembly"/>
    <property type="evidence" value="ECO:0000315"/>
    <property type="project" value="TAIR"/>
</dbReference>
<dbReference type="GO" id="GO:0000963">
    <property type="term" value="P:mitochondrial RNA processing"/>
    <property type="evidence" value="ECO:0000315"/>
    <property type="project" value="TAIR"/>
</dbReference>
<dbReference type="FunFam" id="1.25.40.10:FF:002289">
    <property type="entry name" value="Pentatricopeptide repeat-containing protein At2g28050"/>
    <property type="match status" value="1"/>
</dbReference>
<dbReference type="Gene3D" id="1.25.40.10">
    <property type="entry name" value="Tetratricopeptide repeat domain"/>
    <property type="match status" value="3"/>
</dbReference>
<dbReference type="InterPro" id="IPR002885">
    <property type="entry name" value="Pentatricopeptide_rpt"/>
</dbReference>
<dbReference type="InterPro" id="IPR011990">
    <property type="entry name" value="TPR-like_helical_dom_sf"/>
</dbReference>
<dbReference type="NCBIfam" id="TIGR00756">
    <property type="entry name" value="PPR"/>
    <property type="match status" value="5"/>
</dbReference>
<dbReference type="PANTHER" id="PTHR47447">
    <property type="entry name" value="OS03G0856100 PROTEIN"/>
    <property type="match status" value="1"/>
</dbReference>
<dbReference type="PANTHER" id="PTHR47447:SF28">
    <property type="entry name" value="PENTACOTRIPEPTIDE-REPEAT REGION OF PRORP DOMAIN-CONTAINING PROTEIN"/>
    <property type="match status" value="1"/>
</dbReference>
<dbReference type="Pfam" id="PF01535">
    <property type="entry name" value="PPR"/>
    <property type="match status" value="2"/>
</dbReference>
<dbReference type="Pfam" id="PF13041">
    <property type="entry name" value="PPR_2"/>
    <property type="match status" value="2"/>
</dbReference>
<dbReference type="PROSITE" id="PS51375">
    <property type="entry name" value="PPR"/>
    <property type="match status" value="10"/>
</dbReference>
<comment type="subcellular location">
    <subcellularLocation>
        <location evidence="2">Mitochondrion</location>
    </subcellularLocation>
</comment>
<comment type="similarity">
    <text evidence="2">Belongs to the PPR family. P subfamily.</text>
</comment>
<comment type="online information" name="Pentatricopeptide repeat proteins">
    <link uri="https://ppr.plantenergy.uwa.edu.au"/>
</comment>
<keyword id="KW-0496">Mitochondrion</keyword>
<keyword id="KW-1185">Reference proteome</keyword>
<keyword id="KW-0677">Repeat</keyword>
<keyword id="KW-0809">Transit peptide</keyword>
<protein>
    <recommendedName>
        <fullName>Pentatricopeptide repeat-containing protein At1g66345, mitochondrial</fullName>
    </recommendedName>
</protein>
<sequence length="544" mass="62332">MASALRRLVEQQQWRYLVSQSTRSPKLIHGFFSFSSKTNPNPNKQQQILIDYISKSLQSNDTWETLSTKFSSIDLSDSLIETILLRFKNPETAKQALSFFHWSSHTRNLRHGIKSYALTIHILVKARLLIDARALIESSLLNSPPDSDLVDSLLDTYEISSSTPLVFDLLVQCYAKIRYLELGFDVFKRLCDCGFTLSVITLNTLIHYSSKSKIDDLVWRIYECAIDKRIYPNEITIRIMIQVLCKEGRLKEVVDLLDRICGKRCLPSVIVNTSLVFRVLEEMRIEESMSLLKRLLMKNMVVDTIGYSIVVYAKAKEGDLVSARKVFDEMLQRGFSANSFVYTVFVRVCCEKGDVKEAERLLSEMEESGVSPYDETFNCLIGGFARFGWEEKGLEYCEVMVTRGLMPSCSAFNEMVKSVSKIENVNRANEILTKSIDKGFVPDEHTYSHLIRGFIEGNDIDQALKLFYEMEYRKMSPGFEVFRSLIVGLCTCGKVEAGEKYLKIMKKRLIEPNADIYDALIKAFQKIGDKTNADRVYNEMISVR</sequence>
<reference key="1">
    <citation type="journal article" date="2000" name="Nature">
        <title>Sequence and analysis of chromosome 1 of the plant Arabidopsis thaliana.</title>
        <authorList>
            <person name="Theologis A."/>
            <person name="Ecker J.R."/>
            <person name="Palm C.J."/>
            <person name="Federspiel N.A."/>
            <person name="Kaul S."/>
            <person name="White O."/>
            <person name="Alonso J."/>
            <person name="Altafi H."/>
            <person name="Araujo R."/>
            <person name="Bowman C.L."/>
            <person name="Brooks S.Y."/>
            <person name="Buehler E."/>
            <person name="Chan A."/>
            <person name="Chao Q."/>
            <person name="Chen H."/>
            <person name="Cheuk R.F."/>
            <person name="Chin C.W."/>
            <person name="Chung M.K."/>
            <person name="Conn L."/>
            <person name="Conway A.B."/>
            <person name="Conway A.R."/>
            <person name="Creasy T.H."/>
            <person name="Dewar K."/>
            <person name="Dunn P."/>
            <person name="Etgu P."/>
            <person name="Feldblyum T.V."/>
            <person name="Feng J.-D."/>
            <person name="Fong B."/>
            <person name="Fujii C.Y."/>
            <person name="Gill J.E."/>
            <person name="Goldsmith A.D."/>
            <person name="Haas B."/>
            <person name="Hansen N.F."/>
            <person name="Hughes B."/>
            <person name="Huizar L."/>
            <person name="Hunter J.L."/>
            <person name="Jenkins J."/>
            <person name="Johnson-Hopson C."/>
            <person name="Khan S."/>
            <person name="Khaykin E."/>
            <person name="Kim C.J."/>
            <person name="Koo H.L."/>
            <person name="Kremenetskaia I."/>
            <person name="Kurtz D.B."/>
            <person name="Kwan A."/>
            <person name="Lam B."/>
            <person name="Langin-Hooper S."/>
            <person name="Lee A."/>
            <person name="Lee J.M."/>
            <person name="Lenz C.A."/>
            <person name="Li J.H."/>
            <person name="Li Y.-P."/>
            <person name="Lin X."/>
            <person name="Liu S.X."/>
            <person name="Liu Z.A."/>
            <person name="Luros J.S."/>
            <person name="Maiti R."/>
            <person name="Marziali A."/>
            <person name="Militscher J."/>
            <person name="Miranda M."/>
            <person name="Nguyen M."/>
            <person name="Nierman W.C."/>
            <person name="Osborne B.I."/>
            <person name="Pai G."/>
            <person name="Peterson J."/>
            <person name="Pham P.K."/>
            <person name="Rizzo M."/>
            <person name="Rooney T."/>
            <person name="Rowley D."/>
            <person name="Sakano H."/>
            <person name="Salzberg S.L."/>
            <person name="Schwartz J.R."/>
            <person name="Shinn P."/>
            <person name="Southwick A.M."/>
            <person name="Sun H."/>
            <person name="Tallon L.J."/>
            <person name="Tambunga G."/>
            <person name="Toriumi M.J."/>
            <person name="Town C.D."/>
            <person name="Utterback T."/>
            <person name="Van Aken S."/>
            <person name="Vaysberg M."/>
            <person name="Vysotskaia V.S."/>
            <person name="Walker M."/>
            <person name="Wu D."/>
            <person name="Yu G."/>
            <person name="Fraser C.M."/>
            <person name="Venter J.C."/>
            <person name="Davis R.W."/>
        </authorList>
    </citation>
    <scope>NUCLEOTIDE SEQUENCE [LARGE SCALE GENOMIC DNA]</scope>
    <source>
        <strain>cv. Columbia</strain>
    </source>
</reference>
<reference key="2">
    <citation type="journal article" date="2017" name="Plant J.">
        <title>Araport11: a complete reannotation of the Arabidopsis thaliana reference genome.</title>
        <authorList>
            <person name="Cheng C.Y."/>
            <person name="Krishnakumar V."/>
            <person name="Chan A.P."/>
            <person name="Thibaud-Nissen F."/>
            <person name="Schobel S."/>
            <person name="Town C.D."/>
        </authorList>
    </citation>
    <scope>GENOME REANNOTATION</scope>
    <source>
        <strain>cv. Columbia</strain>
    </source>
</reference>
<reference key="3">
    <citation type="journal article" date="2004" name="Plant Cell">
        <title>Genome-wide analysis of Arabidopsis pentatricopeptide repeat proteins reveals their essential role in organelle biogenesis.</title>
        <authorList>
            <person name="Lurin C."/>
            <person name="Andres C."/>
            <person name="Aubourg S."/>
            <person name="Bellaoui M."/>
            <person name="Bitton F."/>
            <person name="Bruyere C."/>
            <person name="Caboche M."/>
            <person name="Debast C."/>
            <person name="Gualberto J."/>
            <person name="Hoffmann B."/>
            <person name="Lecharny A."/>
            <person name="Le Ret M."/>
            <person name="Martin-Magniette M.-L."/>
            <person name="Mireau H."/>
            <person name="Peeters N."/>
            <person name="Renou J.-P."/>
            <person name="Szurek B."/>
            <person name="Taconnat L."/>
            <person name="Small I."/>
        </authorList>
    </citation>
    <scope>GENE FAMILY</scope>
</reference>
<name>PP107_ARATH</name>
<proteinExistence type="inferred from homology"/>
<evidence type="ECO:0000255" key="1"/>
<evidence type="ECO:0000305" key="2"/>